<organism>
    <name type="scientific">Escherichia coli O45:K1 (strain S88 / ExPEC)</name>
    <dbReference type="NCBI Taxonomy" id="585035"/>
    <lineage>
        <taxon>Bacteria</taxon>
        <taxon>Pseudomonadati</taxon>
        <taxon>Pseudomonadota</taxon>
        <taxon>Gammaproteobacteria</taxon>
        <taxon>Enterobacterales</taxon>
        <taxon>Enterobacteriaceae</taxon>
        <taxon>Escherichia</taxon>
    </lineage>
</organism>
<keyword id="KW-0963">Cytoplasm</keyword>
<keyword id="KW-0413">Isomerase</keyword>
<keyword id="KW-0414">Isoprene biosynthesis</keyword>
<keyword id="KW-0460">Magnesium</keyword>
<keyword id="KW-0464">Manganese</keyword>
<keyword id="KW-0479">Metal-binding</keyword>
<keyword id="KW-1185">Reference proteome</keyword>
<protein>
    <recommendedName>
        <fullName evidence="1">Isopentenyl-diphosphate Delta-isomerase</fullName>
        <shortName evidence="1">IPP isomerase</shortName>
        <ecNumber evidence="1">5.3.3.2</ecNumber>
    </recommendedName>
    <alternativeName>
        <fullName evidence="1">IPP:DMAPP isomerase</fullName>
    </alternativeName>
    <alternativeName>
        <fullName evidence="1">Isopentenyl pyrophosphate isomerase</fullName>
    </alternativeName>
</protein>
<reference key="1">
    <citation type="journal article" date="2009" name="PLoS Genet.">
        <title>Organised genome dynamics in the Escherichia coli species results in highly diverse adaptive paths.</title>
        <authorList>
            <person name="Touchon M."/>
            <person name="Hoede C."/>
            <person name="Tenaillon O."/>
            <person name="Barbe V."/>
            <person name="Baeriswyl S."/>
            <person name="Bidet P."/>
            <person name="Bingen E."/>
            <person name="Bonacorsi S."/>
            <person name="Bouchier C."/>
            <person name="Bouvet O."/>
            <person name="Calteau A."/>
            <person name="Chiapello H."/>
            <person name="Clermont O."/>
            <person name="Cruveiller S."/>
            <person name="Danchin A."/>
            <person name="Diard M."/>
            <person name="Dossat C."/>
            <person name="Karoui M.E."/>
            <person name="Frapy E."/>
            <person name="Garry L."/>
            <person name="Ghigo J.M."/>
            <person name="Gilles A.M."/>
            <person name="Johnson J."/>
            <person name="Le Bouguenec C."/>
            <person name="Lescat M."/>
            <person name="Mangenot S."/>
            <person name="Martinez-Jehanne V."/>
            <person name="Matic I."/>
            <person name="Nassif X."/>
            <person name="Oztas S."/>
            <person name="Petit M.A."/>
            <person name="Pichon C."/>
            <person name="Rouy Z."/>
            <person name="Ruf C.S."/>
            <person name="Schneider D."/>
            <person name="Tourret J."/>
            <person name="Vacherie B."/>
            <person name="Vallenet D."/>
            <person name="Medigue C."/>
            <person name="Rocha E.P.C."/>
            <person name="Denamur E."/>
        </authorList>
    </citation>
    <scope>NUCLEOTIDE SEQUENCE [LARGE SCALE GENOMIC DNA]</scope>
    <source>
        <strain>S88 / ExPEC</strain>
    </source>
</reference>
<proteinExistence type="inferred from homology"/>
<sequence>MQTEHVILLNAQGVPTGTLEKYAAHTADTLLHLAFSSWLFNAKGQLLVTRRALSKKAWPGVWTNSVCGHPQLGESNEEAVIRRCRYELGVEITPPESIYPDFRYRATDPNGIVENEVCPVFAARTTSALQINDDEVMDYQWCDLAAVLRGIDATPWAFSPWMVMQATNREARKRLSAFTQLK</sequence>
<feature type="chain" id="PRO_1000118723" description="Isopentenyl-diphosphate Delta-isomerase">
    <location>
        <begin position="1"/>
        <end position="182"/>
    </location>
</feature>
<feature type="domain" description="Nudix hydrolase">
    <location>
        <begin position="30"/>
        <end position="164"/>
    </location>
</feature>
<feature type="active site" evidence="1">
    <location>
        <position position="67"/>
    </location>
</feature>
<feature type="active site" evidence="1">
    <location>
        <position position="116"/>
    </location>
</feature>
<feature type="binding site" evidence="1">
    <location>
        <position position="25"/>
    </location>
    <ligand>
        <name>Mn(2+)</name>
        <dbReference type="ChEBI" id="CHEBI:29035"/>
    </ligand>
</feature>
<feature type="binding site" evidence="1">
    <location>
        <position position="32"/>
    </location>
    <ligand>
        <name>Mn(2+)</name>
        <dbReference type="ChEBI" id="CHEBI:29035"/>
    </ligand>
</feature>
<feature type="binding site" evidence="1">
    <location>
        <position position="69"/>
    </location>
    <ligand>
        <name>Mn(2+)</name>
        <dbReference type="ChEBI" id="CHEBI:29035"/>
    </ligand>
</feature>
<feature type="binding site" evidence="1">
    <location>
        <position position="87"/>
    </location>
    <ligand>
        <name>Mg(2+)</name>
        <dbReference type="ChEBI" id="CHEBI:18420"/>
    </ligand>
</feature>
<feature type="binding site" evidence="1">
    <location>
        <position position="114"/>
    </location>
    <ligand>
        <name>Mn(2+)</name>
        <dbReference type="ChEBI" id="CHEBI:29035"/>
    </ligand>
</feature>
<feature type="binding site" evidence="1">
    <location>
        <position position="116"/>
    </location>
    <ligand>
        <name>Mn(2+)</name>
        <dbReference type="ChEBI" id="CHEBI:29035"/>
    </ligand>
</feature>
<evidence type="ECO:0000255" key="1">
    <source>
        <dbReference type="HAMAP-Rule" id="MF_00202"/>
    </source>
</evidence>
<dbReference type="EC" id="5.3.3.2" evidence="1"/>
<dbReference type="EMBL" id="CU928161">
    <property type="protein sequence ID" value="CAR04405.1"/>
    <property type="molecule type" value="Genomic_DNA"/>
</dbReference>
<dbReference type="RefSeq" id="WP_001192798.1">
    <property type="nucleotide sequence ID" value="NC_011742.1"/>
</dbReference>
<dbReference type="SMR" id="B7MM76"/>
<dbReference type="KEGG" id="ecz:ECS88_3169"/>
<dbReference type="HOGENOM" id="CLU_060552_2_0_6"/>
<dbReference type="UniPathway" id="UPA00059">
    <property type="reaction ID" value="UER00104"/>
</dbReference>
<dbReference type="Proteomes" id="UP000000747">
    <property type="component" value="Chromosome"/>
</dbReference>
<dbReference type="GO" id="GO:0005737">
    <property type="term" value="C:cytoplasm"/>
    <property type="evidence" value="ECO:0007669"/>
    <property type="project" value="UniProtKB-SubCell"/>
</dbReference>
<dbReference type="GO" id="GO:0004452">
    <property type="term" value="F:isopentenyl-diphosphate delta-isomerase activity"/>
    <property type="evidence" value="ECO:0007669"/>
    <property type="project" value="UniProtKB-UniRule"/>
</dbReference>
<dbReference type="GO" id="GO:0046872">
    <property type="term" value="F:metal ion binding"/>
    <property type="evidence" value="ECO:0007669"/>
    <property type="project" value="UniProtKB-KW"/>
</dbReference>
<dbReference type="GO" id="GO:0050992">
    <property type="term" value="P:dimethylallyl diphosphate biosynthetic process"/>
    <property type="evidence" value="ECO:0007669"/>
    <property type="project" value="UniProtKB-UniRule"/>
</dbReference>
<dbReference type="GO" id="GO:0008299">
    <property type="term" value="P:isoprenoid biosynthetic process"/>
    <property type="evidence" value="ECO:0007669"/>
    <property type="project" value="UniProtKB-KW"/>
</dbReference>
<dbReference type="CDD" id="cd02885">
    <property type="entry name" value="NUDIX_IPP_Isomerase"/>
    <property type="match status" value="1"/>
</dbReference>
<dbReference type="FunFam" id="3.90.79.10:FF:000009">
    <property type="entry name" value="Isopentenyl-diphosphate Delta-isomerase"/>
    <property type="match status" value="1"/>
</dbReference>
<dbReference type="Gene3D" id="3.90.79.10">
    <property type="entry name" value="Nucleoside Triphosphate Pyrophosphohydrolase"/>
    <property type="match status" value="1"/>
</dbReference>
<dbReference type="HAMAP" id="MF_00202">
    <property type="entry name" value="Idi"/>
    <property type="match status" value="1"/>
</dbReference>
<dbReference type="InterPro" id="IPR056375">
    <property type="entry name" value="Idi_bact"/>
</dbReference>
<dbReference type="InterPro" id="IPR011876">
    <property type="entry name" value="IsopentenylPP_isomerase_typ1"/>
</dbReference>
<dbReference type="InterPro" id="IPR015797">
    <property type="entry name" value="NUDIX_hydrolase-like_dom_sf"/>
</dbReference>
<dbReference type="InterPro" id="IPR000086">
    <property type="entry name" value="NUDIX_hydrolase_dom"/>
</dbReference>
<dbReference type="NCBIfam" id="TIGR02150">
    <property type="entry name" value="IPP_isom_1"/>
    <property type="match status" value="1"/>
</dbReference>
<dbReference type="NCBIfam" id="NF002995">
    <property type="entry name" value="PRK03759.1"/>
    <property type="match status" value="1"/>
</dbReference>
<dbReference type="PANTHER" id="PTHR10885">
    <property type="entry name" value="ISOPENTENYL-DIPHOSPHATE DELTA-ISOMERASE"/>
    <property type="match status" value="1"/>
</dbReference>
<dbReference type="PANTHER" id="PTHR10885:SF0">
    <property type="entry name" value="ISOPENTENYL-DIPHOSPHATE DELTA-ISOMERASE"/>
    <property type="match status" value="1"/>
</dbReference>
<dbReference type="Pfam" id="PF00293">
    <property type="entry name" value="NUDIX"/>
    <property type="match status" value="1"/>
</dbReference>
<dbReference type="PIRSF" id="PIRSF018427">
    <property type="entry name" value="Isopntndiph_ism"/>
    <property type="match status" value="1"/>
</dbReference>
<dbReference type="SUPFAM" id="SSF55811">
    <property type="entry name" value="Nudix"/>
    <property type="match status" value="1"/>
</dbReference>
<dbReference type="PROSITE" id="PS51462">
    <property type="entry name" value="NUDIX"/>
    <property type="match status" value="1"/>
</dbReference>
<comment type="function">
    <text evidence="1">Catalyzes the 1,3-allylic rearrangement of the homoallylic substrate isopentenyl (IPP) to its highly electrophilic allylic isomer, dimethylallyl diphosphate (DMAPP).</text>
</comment>
<comment type="catalytic activity">
    <reaction evidence="1">
        <text>isopentenyl diphosphate = dimethylallyl diphosphate</text>
        <dbReference type="Rhea" id="RHEA:23284"/>
        <dbReference type="ChEBI" id="CHEBI:57623"/>
        <dbReference type="ChEBI" id="CHEBI:128769"/>
        <dbReference type="EC" id="5.3.3.2"/>
    </reaction>
</comment>
<comment type="cofactor">
    <cofactor evidence="1">
        <name>Mg(2+)</name>
        <dbReference type="ChEBI" id="CHEBI:18420"/>
    </cofactor>
    <text evidence="1">Binds 1 Mg(2+) ion per subunit. The magnesium ion binds only when substrate is bound.</text>
</comment>
<comment type="cofactor">
    <cofactor evidence="1">
        <name>Mn(2+)</name>
        <dbReference type="ChEBI" id="CHEBI:29035"/>
    </cofactor>
    <text evidence="1">Binds 1 Mn(2+) ion per subunit.</text>
</comment>
<comment type="pathway">
    <text evidence="1">Isoprenoid biosynthesis; dimethylallyl diphosphate biosynthesis; dimethylallyl diphosphate from isopentenyl diphosphate: step 1/1.</text>
</comment>
<comment type="subunit">
    <text evidence="1">Homodimer.</text>
</comment>
<comment type="subcellular location">
    <subcellularLocation>
        <location evidence="1">Cytoplasm</location>
    </subcellularLocation>
</comment>
<comment type="similarity">
    <text evidence="1">Belongs to the IPP isomerase type 1 family.</text>
</comment>
<name>IDI_ECO45</name>
<gene>
    <name evidence="1" type="primary">idi</name>
    <name type="ordered locus">ECS88_3169</name>
</gene>
<accession>B7MM76</accession>